<protein>
    <recommendedName>
        <fullName>Gene product 16.8</fullName>
        <shortName>gp16.8</shortName>
    </recommendedName>
    <alternativeName>
        <fullName>Protein p16.8</fullName>
    </alternativeName>
</protein>
<dbReference type="EMBL" id="M11813">
    <property type="protein sequence ID" value="AAA88497.1"/>
    <property type="molecule type" value="Genomic_DNA"/>
</dbReference>
<dbReference type="PIR" id="D29004">
    <property type="entry name" value="WRBP68"/>
</dbReference>
<dbReference type="Proteomes" id="UP000000855">
    <property type="component" value="Segment"/>
</dbReference>
<evidence type="ECO:0000305" key="1"/>
<organismHost>
    <name type="scientific">Bacillus subtilis</name>
    <dbReference type="NCBI Taxonomy" id="1423"/>
</organismHost>
<reference key="1">
    <citation type="journal article" date="1986" name="Gene">
        <title>Nucleotide sequence of the right early region of Bacillus subtilis phage PZA completes the 19366-bp sequence of PZA genome. Comparison with the homologous sequence of phage phi 29.</title>
        <authorList>
            <person name="Paces V."/>
            <person name="Vlcek C."/>
            <person name="Urbanek P."/>
            <person name="Hostomsky Z."/>
        </authorList>
    </citation>
    <scope>NUCLEOTIDE SEQUENCE [GENOMIC DNA]</scope>
</reference>
<gene>
    <name type="primary">16.8</name>
</gene>
<sequence length="105" mass="12444">MIDIIVKEDKRLITVQTPEGDEVFYTLSFSDEHKLLKRSSARLRNNIYAIGVANIRWVLVDMDNMILSEYMHHVDILKDIDRKMRQLGYIVISEWQHANKKGTRR</sequence>
<organism>
    <name type="scientific">Bacillus phage PZA</name>
    <name type="common">Bacteriophage PZA</name>
    <dbReference type="NCBI Taxonomy" id="10757"/>
    <lineage>
        <taxon>Viruses</taxon>
        <taxon>Duplodnaviria</taxon>
        <taxon>Heunggongvirae</taxon>
        <taxon>Uroviricota</taxon>
        <taxon>Caudoviricetes</taxon>
        <taxon>Salasmaviridae</taxon>
        <taxon>Picovirinae</taxon>
        <taxon>Salasvirus</taxon>
        <taxon>Salasvirus PZA</taxon>
    </lineage>
</organism>
<proteinExistence type="inferred from homology"/>
<keyword id="KW-0244">Early protein</keyword>
<feature type="chain" id="PRO_0000106618" description="Gene product 16.8">
    <location>
        <begin position="1"/>
        <end position="105"/>
    </location>
</feature>
<accession>P68935</accession>
<accession>P08387</accession>
<name>GP168_BPPZA</name>
<comment type="similarity">
    <text evidence="1">Belongs to the phi29likevirus gp16.8 family.</text>
</comment>